<keyword id="KW-0004">4Fe-4S</keyword>
<keyword id="KW-0963">Cytoplasm</keyword>
<keyword id="KW-0408">Iron</keyword>
<keyword id="KW-0411">Iron-sulfur</keyword>
<keyword id="KW-0479">Metal-binding</keyword>
<keyword id="KW-1185">Reference proteome</keyword>
<keyword id="KW-0949">S-adenosyl-L-methionine</keyword>
<keyword id="KW-0808">Transferase</keyword>
<proteinExistence type="inferred from homology"/>
<protein>
    <recommendedName>
        <fullName evidence="1">Lipoyl synthase</fullName>
        <ecNumber evidence="1">2.8.1.8</ecNumber>
    </recommendedName>
    <alternativeName>
        <fullName evidence="1">Lip-syn</fullName>
        <shortName evidence="1">LS</shortName>
    </alternativeName>
    <alternativeName>
        <fullName evidence="1">Lipoate synthase</fullName>
    </alternativeName>
    <alternativeName>
        <fullName evidence="1">Lipoic acid synthase</fullName>
    </alternativeName>
    <alternativeName>
        <fullName evidence="1">Sulfur insertion protein LipA</fullName>
    </alternativeName>
</protein>
<name>LIPA_CUPNH</name>
<evidence type="ECO:0000255" key="1">
    <source>
        <dbReference type="HAMAP-Rule" id="MF_00206"/>
    </source>
</evidence>
<evidence type="ECO:0000255" key="2">
    <source>
        <dbReference type="PROSITE-ProRule" id="PRU01266"/>
    </source>
</evidence>
<evidence type="ECO:0000256" key="3">
    <source>
        <dbReference type="SAM" id="MobiDB-lite"/>
    </source>
</evidence>
<accession>Q0KFE6</accession>
<organism>
    <name type="scientific">Cupriavidus necator (strain ATCC 17699 / DSM 428 / KCTC 22496 / NCIMB 10442 / H16 / Stanier 337)</name>
    <name type="common">Ralstonia eutropha</name>
    <dbReference type="NCBI Taxonomy" id="381666"/>
    <lineage>
        <taxon>Bacteria</taxon>
        <taxon>Pseudomonadati</taxon>
        <taxon>Pseudomonadota</taxon>
        <taxon>Betaproteobacteria</taxon>
        <taxon>Burkholderiales</taxon>
        <taxon>Burkholderiaceae</taxon>
        <taxon>Cupriavidus</taxon>
    </lineage>
</organism>
<feature type="chain" id="PRO_0000325298" description="Lipoyl synthase">
    <location>
        <begin position="1"/>
        <end position="331"/>
    </location>
</feature>
<feature type="domain" description="Radical SAM core" evidence="2">
    <location>
        <begin position="89"/>
        <end position="307"/>
    </location>
</feature>
<feature type="region of interest" description="Disordered" evidence="3">
    <location>
        <begin position="1"/>
        <end position="33"/>
    </location>
</feature>
<feature type="compositionally biased region" description="Polar residues" evidence="3">
    <location>
        <begin position="7"/>
        <end position="17"/>
    </location>
</feature>
<feature type="compositionally biased region" description="Basic and acidic residues" evidence="3">
    <location>
        <begin position="21"/>
        <end position="33"/>
    </location>
</feature>
<feature type="binding site" evidence="1">
    <location>
        <position position="78"/>
    </location>
    <ligand>
        <name>[4Fe-4S] cluster</name>
        <dbReference type="ChEBI" id="CHEBI:49883"/>
        <label>1</label>
    </ligand>
</feature>
<feature type="binding site" evidence="1">
    <location>
        <position position="83"/>
    </location>
    <ligand>
        <name>[4Fe-4S] cluster</name>
        <dbReference type="ChEBI" id="CHEBI:49883"/>
        <label>1</label>
    </ligand>
</feature>
<feature type="binding site" evidence="1">
    <location>
        <position position="89"/>
    </location>
    <ligand>
        <name>[4Fe-4S] cluster</name>
        <dbReference type="ChEBI" id="CHEBI:49883"/>
        <label>1</label>
    </ligand>
</feature>
<feature type="binding site" evidence="1">
    <location>
        <position position="104"/>
    </location>
    <ligand>
        <name>[4Fe-4S] cluster</name>
        <dbReference type="ChEBI" id="CHEBI:49883"/>
        <label>2</label>
        <note>4Fe-4S-S-AdoMet</note>
    </ligand>
</feature>
<feature type="binding site" evidence="1">
    <location>
        <position position="108"/>
    </location>
    <ligand>
        <name>[4Fe-4S] cluster</name>
        <dbReference type="ChEBI" id="CHEBI:49883"/>
        <label>2</label>
        <note>4Fe-4S-S-AdoMet</note>
    </ligand>
</feature>
<feature type="binding site" evidence="1">
    <location>
        <position position="111"/>
    </location>
    <ligand>
        <name>[4Fe-4S] cluster</name>
        <dbReference type="ChEBI" id="CHEBI:49883"/>
        <label>2</label>
        <note>4Fe-4S-S-AdoMet</note>
    </ligand>
</feature>
<feature type="binding site" evidence="1">
    <location>
        <position position="318"/>
    </location>
    <ligand>
        <name>[4Fe-4S] cluster</name>
        <dbReference type="ChEBI" id="CHEBI:49883"/>
        <label>1</label>
    </ligand>
</feature>
<gene>
    <name evidence="1" type="primary">lipA</name>
    <name type="ordered locus">H16_A0123</name>
</gene>
<reference key="1">
    <citation type="journal article" date="2006" name="Nat. Biotechnol.">
        <title>Genome sequence of the bioplastic-producing 'Knallgas' bacterium Ralstonia eutropha H16.</title>
        <authorList>
            <person name="Pohlmann A."/>
            <person name="Fricke W.F."/>
            <person name="Reinecke F."/>
            <person name="Kusian B."/>
            <person name="Liesegang H."/>
            <person name="Cramm R."/>
            <person name="Eitinger T."/>
            <person name="Ewering C."/>
            <person name="Poetter M."/>
            <person name="Schwartz E."/>
            <person name="Strittmatter A."/>
            <person name="Voss I."/>
            <person name="Gottschalk G."/>
            <person name="Steinbuechel A."/>
            <person name="Friedrich B."/>
            <person name="Bowien B."/>
        </authorList>
    </citation>
    <scope>NUCLEOTIDE SEQUENCE [LARGE SCALE GENOMIC DNA]</scope>
    <source>
        <strain>ATCC 17699 / DSM 428 / KCTC 22496 / NCIMB 10442 / H16 / Stanier 337</strain>
    </source>
</reference>
<dbReference type="EC" id="2.8.1.8" evidence="1"/>
<dbReference type="EMBL" id="AM260479">
    <property type="protein sequence ID" value="CAJ91275.1"/>
    <property type="molecule type" value="Genomic_DNA"/>
</dbReference>
<dbReference type="RefSeq" id="WP_010811489.1">
    <property type="nucleotide sequence ID" value="NZ_CP039287.1"/>
</dbReference>
<dbReference type="SMR" id="Q0KFE6"/>
<dbReference type="STRING" id="381666.H16_A0123"/>
<dbReference type="KEGG" id="reh:H16_A0123"/>
<dbReference type="eggNOG" id="COG0320">
    <property type="taxonomic scope" value="Bacteria"/>
</dbReference>
<dbReference type="HOGENOM" id="CLU_033144_2_1_4"/>
<dbReference type="OrthoDB" id="9787898at2"/>
<dbReference type="UniPathway" id="UPA00538">
    <property type="reaction ID" value="UER00593"/>
</dbReference>
<dbReference type="Proteomes" id="UP000008210">
    <property type="component" value="Chromosome 1"/>
</dbReference>
<dbReference type="GO" id="GO:0005737">
    <property type="term" value="C:cytoplasm"/>
    <property type="evidence" value="ECO:0007669"/>
    <property type="project" value="UniProtKB-SubCell"/>
</dbReference>
<dbReference type="GO" id="GO:0051539">
    <property type="term" value="F:4 iron, 4 sulfur cluster binding"/>
    <property type="evidence" value="ECO:0007669"/>
    <property type="project" value="UniProtKB-UniRule"/>
</dbReference>
<dbReference type="GO" id="GO:0016992">
    <property type="term" value="F:lipoate synthase activity"/>
    <property type="evidence" value="ECO:0007669"/>
    <property type="project" value="UniProtKB-UniRule"/>
</dbReference>
<dbReference type="GO" id="GO:0046872">
    <property type="term" value="F:metal ion binding"/>
    <property type="evidence" value="ECO:0007669"/>
    <property type="project" value="UniProtKB-KW"/>
</dbReference>
<dbReference type="CDD" id="cd01335">
    <property type="entry name" value="Radical_SAM"/>
    <property type="match status" value="1"/>
</dbReference>
<dbReference type="FunFam" id="3.20.20.70:FF:000023">
    <property type="entry name" value="Lipoyl synthase"/>
    <property type="match status" value="1"/>
</dbReference>
<dbReference type="Gene3D" id="3.20.20.70">
    <property type="entry name" value="Aldolase class I"/>
    <property type="match status" value="1"/>
</dbReference>
<dbReference type="HAMAP" id="MF_00206">
    <property type="entry name" value="Lipoyl_synth"/>
    <property type="match status" value="1"/>
</dbReference>
<dbReference type="InterPro" id="IPR013785">
    <property type="entry name" value="Aldolase_TIM"/>
</dbReference>
<dbReference type="InterPro" id="IPR006638">
    <property type="entry name" value="Elp3/MiaA/NifB-like_rSAM"/>
</dbReference>
<dbReference type="InterPro" id="IPR031691">
    <property type="entry name" value="LIAS_N"/>
</dbReference>
<dbReference type="InterPro" id="IPR003698">
    <property type="entry name" value="Lipoyl_synth"/>
</dbReference>
<dbReference type="InterPro" id="IPR007197">
    <property type="entry name" value="rSAM"/>
</dbReference>
<dbReference type="NCBIfam" id="TIGR00510">
    <property type="entry name" value="lipA"/>
    <property type="match status" value="1"/>
</dbReference>
<dbReference type="NCBIfam" id="NF004019">
    <property type="entry name" value="PRK05481.1"/>
    <property type="match status" value="1"/>
</dbReference>
<dbReference type="NCBIfam" id="NF009544">
    <property type="entry name" value="PRK12928.1"/>
    <property type="match status" value="1"/>
</dbReference>
<dbReference type="PANTHER" id="PTHR10949">
    <property type="entry name" value="LIPOYL SYNTHASE"/>
    <property type="match status" value="1"/>
</dbReference>
<dbReference type="PANTHER" id="PTHR10949:SF0">
    <property type="entry name" value="LIPOYL SYNTHASE, MITOCHONDRIAL"/>
    <property type="match status" value="1"/>
</dbReference>
<dbReference type="Pfam" id="PF16881">
    <property type="entry name" value="LIAS_N"/>
    <property type="match status" value="1"/>
</dbReference>
<dbReference type="Pfam" id="PF04055">
    <property type="entry name" value="Radical_SAM"/>
    <property type="match status" value="1"/>
</dbReference>
<dbReference type="PIRSF" id="PIRSF005963">
    <property type="entry name" value="Lipoyl_synth"/>
    <property type="match status" value="1"/>
</dbReference>
<dbReference type="SFLD" id="SFLDF00271">
    <property type="entry name" value="lipoyl_synthase"/>
    <property type="match status" value="1"/>
</dbReference>
<dbReference type="SFLD" id="SFLDG01058">
    <property type="entry name" value="lipoyl_synthase_like"/>
    <property type="match status" value="1"/>
</dbReference>
<dbReference type="SMART" id="SM00729">
    <property type="entry name" value="Elp3"/>
    <property type="match status" value="1"/>
</dbReference>
<dbReference type="SUPFAM" id="SSF102114">
    <property type="entry name" value="Radical SAM enzymes"/>
    <property type="match status" value="1"/>
</dbReference>
<dbReference type="PROSITE" id="PS51918">
    <property type="entry name" value="RADICAL_SAM"/>
    <property type="match status" value="1"/>
</dbReference>
<sequence length="331" mass="37024">MSDALIATSSEAPQSPAEQYDPTRKQKSADKTARIPIKIVPAEKLKKPDWIRVKAATGSSRFYEIKDILRANNLVTVCEEASCPNIGECFGKGTATFMIMGDKCTRRCPFCDVGHGRPDPLDVNEPGNLARTIAQLKLNYVVITSVDRDDLRDGGAQHYVDCISQTRELSPATRIEVLVPDFRGRLDKALDILQACPPDVMNHNMETVPRLYKQARPGADYEHSLKLLQEFKRRNPNVPTKSGLMVGLGETDEEILEVMRDMRAHDIDMLTIGQYLAPSNHHLPVLRYVHPDTFKMFEEEAYKMGFTHAAVGAMVRSSYHADQQAHQAGFA</sequence>
<comment type="function">
    <text evidence="1">Catalyzes the radical-mediated insertion of two sulfur atoms into the C-6 and C-8 positions of the octanoyl moiety bound to the lipoyl domains of lipoate-dependent enzymes, thereby converting the octanoylated domains into lipoylated derivatives.</text>
</comment>
<comment type="catalytic activity">
    <reaction evidence="1">
        <text>[[Fe-S] cluster scaffold protein carrying a second [4Fe-4S](2+) cluster] + N(6)-octanoyl-L-lysyl-[protein] + 2 oxidized [2Fe-2S]-[ferredoxin] + 2 S-adenosyl-L-methionine + 4 H(+) = [[Fe-S] cluster scaffold protein] + N(6)-[(R)-dihydrolipoyl]-L-lysyl-[protein] + 4 Fe(3+) + 2 hydrogen sulfide + 2 5'-deoxyadenosine + 2 L-methionine + 2 reduced [2Fe-2S]-[ferredoxin]</text>
        <dbReference type="Rhea" id="RHEA:16585"/>
        <dbReference type="Rhea" id="RHEA-COMP:9928"/>
        <dbReference type="Rhea" id="RHEA-COMP:10000"/>
        <dbReference type="Rhea" id="RHEA-COMP:10001"/>
        <dbReference type="Rhea" id="RHEA-COMP:10475"/>
        <dbReference type="Rhea" id="RHEA-COMP:14568"/>
        <dbReference type="Rhea" id="RHEA-COMP:14569"/>
        <dbReference type="ChEBI" id="CHEBI:15378"/>
        <dbReference type="ChEBI" id="CHEBI:17319"/>
        <dbReference type="ChEBI" id="CHEBI:29034"/>
        <dbReference type="ChEBI" id="CHEBI:29919"/>
        <dbReference type="ChEBI" id="CHEBI:33722"/>
        <dbReference type="ChEBI" id="CHEBI:33737"/>
        <dbReference type="ChEBI" id="CHEBI:33738"/>
        <dbReference type="ChEBI" id="CHEBI:57844"/>
        <dbReference type="ChEBI" id="CHEBI:59789"/>
        <dbReference type="ChEBI" id="CHEBI:78809"/>
        <dbReference type="ChEBI" id="CHEBI:83100"/>
        <dbReference type="EC" id="2.8.1.8"/>
    </reaction>
</comment>
<comment type="cofactor">
    <cofactor evidence="1">
        <name>[4Fe-4S] cluster</name>
        <dbReference type="ChEBI" id="CHEBI:49883"/>
    </cofactor>
    <text evidence="1">Binds 2 [4Fe-4S] clusters per subunit. One cluster is coordinated with 3 cysteines and an exchangeable S-adenosyl-L-methionine.</text>
</comment>
<comment type="pathway">
    <text evidence="1">Protein modification; protein lipoylation via endogenous pathway; protein N(6)-(lipoyl)lysine from octanoyl-[acyl-carrier-protein]: step 2/2.</text>
</comment>
<comment type="subcellular location">
    <subcellularLocation>
        <location evidence="1">Cytoplasm</location>
    </subcellularLocation>
</comment>
<comment type="similarity">
    <text evidence="1">Belongs to the radical SAM superfamily. Lipoyl synthase family.</text>
</comment>